<reference key="1">
    <citation type="journal article" date="2008" name="J. Bacteriol.">
        <title>The pangenome structure of Escherichia coli: comparative genomic analysis of E. coli commensal and pathogenic isolates.</title>
        <authorList>
            <person name="Rasko D.A."/>
            <person name="Rosovitz M.J."/>
            <person name="Myers G.S.A."/>
            <person name="Mongodin E.F."/>
            <person name="Fricke W.F."/>
            <person name="Gajer P."/>
            <person name="Crabtree J."/>
            <person name="Sebaihia M."/>
            <person name="Thomson N.R."/>
            <person name="Chaudhuri R."/>
            <person name="Henderson I.R."/>
            <person name="Sperandio V."/>
            <person name="Ravel J."/>
        </authorList>
    </citation>
    <scope>NUCLEOTIDE SEQUENCE [LARGE SCALE GENOMIC DNA]</scope>
    <source>
        <strain>E24377A / ETEC</strain>
    </source>
</reference>
<name>YCAR_ECO24</name>
<gene>
    <name evidence="1" type="primary">ycaR</name>
    <name type="ordered locus">EcE24377A_1015</name>
</gene>
<proteinExistence type="inferred from homology"/>
<organism>
    <name type="scientific">Escherichia coli O139:H28 (strain E24377A / ETEC)</name>
    <dbReference type="NCBI Taxonomy" id="331111"/>
    <lineage>
        <taxon>Bacteria</taxon>
        <taxon>Pseudomonadati</taxon>
        <taxon>Pseudomonadota</taxon>
        <taxon>Gammaproteobacteria</taxon>
        <taxon>Enterobacterales</taxon>
        <taxon>Enterobacteriaceae</taxon>
        <taxon>Escherichia</taxon>
    </lineage>
</organism>
<sequence length="60" mass="6855">MDHRLLEIIACPVCNGKLWYNQEKQELICKLDNLAFPLRDGIPVLLETEARVLTADESKS</sequence>
<comment type="similarity">
    <text evidence="1">Belongs to the UPF0434 family.</text>
</comment>
<evidence type="ECO:0000255" key="1">
    <source>
        <dbReference type="HAMAP-Rule" id="MF_01187"/>
    </source>
</evidence>
<keyword id="KW-1185">Reference proteome</keyword>
<accession>A7ZK06</accession>
<feature type="chain" id="PRO_1000065838" description="UPF0434 protein YcaR">
    <location>
        <begin position="1"/>
        <end position="60"/>
    </location>
</feature>
<dbReference type="EMBL" id="CP000800">
    <property type="protein sequence ID" value="ABV17619.1"/>
    <property type="molecule type" value="Genomic_DNA"/>
</dbReference>
<dbReference type="RefSeq" id="WP_000350058.1">
    <property type="nucleotide sequence ID" value="NC_009801.1"/>
</dbReference>
<dbReference type="SMR" id="A7ZK06"/>
<dbReference type="GeneID" id="93776498"/>
<dbReference type="KEGG" id="ecw:EcE24377A_1015"/>
<dbReference type="HOGENOM" id="CLU_155659_3_1_6"/>
<dbReference type="Proteomes" id="UP000001122">
    <property type="component" value="Chromosome"/>
</dbReference>
<dbReference type="GO" id="GO:0005829">
    <property type="term" value="C:cytosol"/>
    <property type="evidence" value="ECO:0007669"/>
    <property type="project" value="TreeGrafter"/>
</dbReference>
<dbReference type="FunFam" id="2.20.25.10:FF:000002">
    <property type="entry name" value="UPF0434 protein YcaR"/>
    <property type="match status" value="1"/>
</dbReference>
<dbReference type="Gene3D" id="2.20.25.10">
    <property type="match status" value="1"/>
</dbReference>
<dbReference type="HAMAP" id="MF_01187">
    <property type="entry name" value="UPF0434"/>
    <property type="match status" value="1"/>
</dbReference>
<dbReference type="InterPro" id="IPR005651">
    <property type="entry name" value="Trm112-like"/>
</dbReference>
<dbReference type="NCBIfam" id="NF008806">
    <property type="entry name" value="PRK11827.1"/>
    <property type="match status" value="1"/>
</dbReference>
<dbReference type="PANTHER" id="PTHR33505:SF4">
    <property type="entry name" value="PROTEIN PREY, MITOCHONDRIAL"/>
    <property type="match status" value="1"/>
</dbReference>
<dbReference type="PANTHER" id="PTHR33505">
    <property type="entry name" value="ZGC:162634"/>
    <property type="match status" value="1"/>
</dbReference>
<dbReference type="Pfam" id="PF03966">
    <property type="entry name" value="Trm112p"/>
    <property type="match status" value="1"/>
</dbReference>
<dbReference type="SUPFAM" id="SSF158997">
    <property type="entry name" value="Trm112p-like"/>
    <property type="match status" value="1"/>
</dbReference>
<protein>
    <recommendedName>
        <fullName evidence="1">UPF0434 protein YcaR</fullName>
    </recommendedName>
</protein>